<evidence type="ECO:0000255" key="1">
    <source>
        <dbReference type="HAMAP-Rule" id="MF_00444"/>
    </source>
</evidence>
<proteinExistence type="inferred from homology"/>
<reference key="1">
    <citation type="journal article" date="2006" name="Mol. Biol. Evol.">
        <title>The chloroplast genome sequence of Chara vulgaris sheds new light into the closest green algal relatives of land plants.</title>
        <authorList>
            <person name="Turmel M."/>
            <person name="Otis C."/>
            <person name="Lemieux C."/>
        </authorList>
    </citation>
    <scope>NUCLEOTIDE SEQUENCE [LARGE SCALE GENOMIC DNA]</scope>
</reference>
<name>CLPP_CHAVU</name>
<sequence>MPIGVPKVPFRLPGEEDAVWVDIYNRLYRERLLFLGQRVDDEIANQLIGIMMYLNGEDDSKEMFMYINSPGGSVVAGIAVFDAMQYVGPDVTTICMGMAASMGSFILMGGEMTKRIALPHARVMIHQPASSYYDGQAGECLMEAEEVLKLRDCIAKVYMNRTGQPGWVIYRDMDRDIFMSALEAKSYGIVDLVGEDPTATPSVWFRWPSLLDSKDSNEK</sequence>
<protein>
    <recommendedName>
        <fullName evidence="1">ATP-dependent Clp protease proteolytic subunit</fullName>
        <ecNumber evidence="1">3.4.21.92</ecNumber>
    </recommendedName>
    <alternativeName>
        <fullName evidence="1">Endopeptidase Clp</fullName>
    </alternativeName>
</protein>
<organism>
    <name type="scientific">Chara vulgaris</name>
    <name type="common">Common stonewort</name>
    <dbReference type="NCBI Taxonomy" id="55564"/>
    <lineage>
        <taxon>Eukaryota</taxon>
        <taxon>Viridiplantae</taxon>
        <taxon>Streptophyta</taxon>
        <taxon>Charophyceae</taxon>
        <taxon>Charales</taxon>
        <taxon>Characeae</taxon>
        <taxon>Chara</taxon>
    </lineage>
</organism>
<gene>
    <name evidence="1" type="primary">clpP</name>
</gene>
<comment type="function">
    <text evidence="1">Cleaves peptides in various proteins in a process that requires ATP hydrolysis. Has a chymotrypsin-like activity. Plays a major role in the degradation of misfolded proteins.</text>
</comment>
<comment type="catalytic activity">
    <reaction evidence="1">
        <text>Hydrolysis of proteins to small peptides in the presence of ATP and magnesium. alpha-casein is the usual test substrate. In the absence of ATP, only oligopeptides shorter than five residues are hydrolyzed (such as succinyl-Leu-Tyr-|-NHMec, and Leu-Tyr-Leu-|-Tyr-Trp, in which cleavage of the -Tyr-|-Leu- and -Tyr-|-Trp bonds also occurs).</text>
        <dbReference type="EC" id="3.4.21.92"/>
    </reaction>
</comment>
<comment type="subunit">
    <text>Component of the chloroplastic Clp protease core complex.</text>
</comment>
<comment type="subcellular location">
    <subcellularLocation>
        <location evidence="1">Plastid</location>
        <location evidence="1">Chloroplast stroma</location>
    </subcellularLocation>
</comment>
<comment type="similarity">
    <text evidence="1">Belongs to the peptidase S14 family.</text>
</comment>
<keyword id="KW-0150">Chloroplast</keyword>
<keyword id="KW-0378">Hydrolase</keyword>
<keyword id="KW-0934">Plastid</keyword>
<keyword id="KW-0645">Protease</keyword>
<keyword id="KW-0720">Serine protease</keyword>
<dbReference type="EC" id="3.4.21.92" evidence="1"/>
<dbReference type="EMBL" id="DQ229107">
    <property type="protein sequence ID" value="ABA61902.1"/>
    <property type="molecule type" value="Genomic_DNA"/>
</dbReference>
<dbReference type="RefSeq" id="YP_635771.1">
    <property type="nucleotide sequence ID" value="NC_008097.1"/>
</dbReference>
<dbReference type="SMR" id="Q1ACH6"/>
<dbReference type="MEROPS" id="S14.002"/>
<dbReference type="GeneID" id="4100272"/>
<dbReference type="GO" id="GO:0009570">
    <property type="term" value="C:chloroplast stroma"/>
    <property type="evidence" value="ECO:0007669"/>
    <property type="project" value="UniProtKB-SubCell"/>
</dbReference>
<dbReference type="GO" id="GO:0009368">
    <property type="term" value="C:endopeptidase Clp complex"/>
    <property type="evidence" value="ECO:0007669"/>
    <property type="project" value="TreeGrafter"/>
</dbReference>
<dbReference type="GO" id="GO:0004176">
    <property type="term" value="F:ATP-dependent peptidase activity"/>
    <property type="evidence" value="ECO:0007669"/>
    <property type="project" value="InterPro"/>
</dbReference>
<dbReference type="GO" id="GO:0051117">
    <property type="term" value="F:ATPase binding"/>
    <property type="evidence" value="ECO:0007669"/>
    <property type="project" value="TreeGrafter"/>
</dbReference>
<dbReference type="GO" id="GO:0004252">
    <property type="term" value="F:serine-type endopeptidase activity"/>
    <property type="evidence" value="ECO:0007669"/>
    <property type="project" value="UniProtKB-UniRule"/>
</dbReference>
<dbReference type="GO" id="GO:0006515">
    <property type="term" value="P:protein quality control for misfolded or incompletely synthesized proteins"/>
    <property type="evidence" value="ECO:0007669"/>
    <property type="project" value="TreeGrafter"/>
</dbReference>
<dbReference type="CDD" id="cd07017">
    <property type="entry name" value="S14_ClpP_2"/>
    <property type="match status" value="1"/>
</dbReference>
<dbReference type="FunFam" id="3.90.226.10:FF:000006">
    <property type="entry name" value="ATP-dependent Clp protease proteolytic subunit"/>
    <property type="match status" value="1"/>
</dbReference>
<dbReference type="Gene3D" id="3.90.226.10">
    <property type="entry name" value="2-enoyl-CoA Hydratase, Chain A, domain 1"/>
    <property type="match status" value="1"/>
</dbReference>
<dbReference type="HAMAP" id="MF_00444">
    <property type="entry name" value="ClpP"/>
    <property type="match status" value="1"/>
</dbReference>
<dbReference type="InterPro" id="IPR001907">
    <property type="entry name" value="ClpP"/>
</dbReference>
<dbReference type="InterPro" id="IPR029045">
    <property type="entry name" value="ClpP/crotonase-like_dom_sf"/>
</dbReference>
<dbReference type="InterPro" id="IPR023562">
    <property type="entry name" value="ClpP/TepA"/>
</dbReference>
<dbReference type="InterPro" id="IPR033135">
    <property type="entry name" value="ClpP_His_AS"/>
</dbReference>
<dbReference type="InterPro" id="IPR018215">
    <property type="entry name" value="ClpP_Ser_AS"/>
</dbReference>
<dbReference type="PANTHER" id="PTHR10381">
    <property type="entry name" value="ATP-DEPENDENT CLP PROTEASE PROTEOLYTIC SUBUNIT"/>
    <property type="match status" value="1"/>
</dbReference>
<dbReference type="PANTHER" id="PTHR10381:SF15">
    <property type="entry name" value="CHLOROPLASTIC ATP-DEPENDENT CLP PROTEASE PROTEOLYTIC SUBUNIT 1"/>
    <property type="match status" value="1"/>
</dbReference>
<dbReference type="Pfam" id="PF00574">
    <property type="entry name" value="CLP_protease"/>
    <property type="match status" value="1"/>
</dbReference>
<dbReference type="PRINTS" id="PR00127">
    <property type="entry name" value="CLPPROTEASEP"/>
</dbReference>
<dbReference type="SUPFAM" id="SSF52096">
    <property type="entry name" value="ClpP/crotonase"/>
    <property type="match status" value="1"/>
</dbReference>
<dbReference type="PROSITE" id="PS00382">
    <property type="entry name" value="CLP_PROTEASE_HIS"/>
    <property type="match status" value="1"/>
</dbReference>
<dbReference type="PROSITE" id="PS00381">
    <property type="entry name" value="CLP_PROTEASE_SER"/>
    <property type="match status" value="1"/>
</dbReference>
<geneLocation type="chloroplast"/>
<accession>Q1ACH6</accession>
<feature type="chain" id="PRO_0000275278" description="ATP-dependent Clp protease proteolytic subunit">
    <location>
        <begin position="1"/>
        <end position="219"/>
    </location>
</feature>
<feature type="active site" description="Nucleophile" evidence="1">
    <location>
        <position position="101"/>
    </location>
</feature>
<feature type="active site" evidence="1">
    <location>
        <position position="126"/>
    </location>
</feature>